<gene>
    <name evidence="1" type="primary">ispE</name>
    <name type="ordered locus">BAMEG_0054</name>
</gene>
<evidence type="ECO:0000255" key="1">
    <source>
        <dbReference type="HAMAP-Rule" id="MF_00061"/>
    </source>
</evidence>
<name>ISPE_BACAC</name>
<feature type="chain" id="PRO_1000117878" description="4-diphosphocytidyl-2-C-methyl-D-erythritol kinase">
    <location>
        <begin position="1"/>
        <end position="289"/>
    </location>
</feature>
<feature type="active site" evidence="1">
    <location>
        <position position="10"/>
    </location>
</feature>
<feature type="active site" evidence="1">
    <location>
        <position position="136"/>
    </location>
</feature>
<feature type="binding site" evidence="1">
    <location>
        <begin position="94"/>
        <end position="104"/>
    </location>
    <ligand>
        <name>ATP</name>
        <dbReference type="ChEBI" id="CHEBI:30616"/>
    </ligand>
</feature>
<comment type="function">
    <text evidence="1">Catalyzes the phosphorylation of the position 2 hydroxy group of 4-diphosphocytidyl-2C-methyl-D-erythritol.</text>
</comment>
<comment type="catalytic activity">
    <reaction evidence="1">
        <text>4-CDP-2-C-methyl-D-erythritol + ATP = 4-CDP-2-C-methyl-D-erythritol 2-phosphate + ADP + H(+)</text>
        <dbReference type="Rhea" id="RHEA:18437"/>
        <dbReference type="ChEBI" id="CHEBI:15378"/>
        <dbReference type="ChEBI" id="CHEBI:30616"/>
        <dbReference type="ChEBI" id="CHEBI:57823"/>
        <dbReference type="ChEBI" id="CHEBI:57919"/>
        <dbReference type="ChEBI" id="CHEBI:456216"/>
        <dbReference type="EC" id="2.7.1.148"/>
    </reaction>
</comment>
<comment type="pathway">
    <text evidence="1">Isoprenoid biosynthesis; isopentenyl diphosphate biosynthesis via DXP pathway; isopentenyl diphosphate from 1-deoxy-D-xylulose 5-phosphate: step 3/6.</text>
</comment>
<comment type="similarity">
    <text evidence="1">Belongs to the GHMP kinase family. IspE subfamily.</text>
</comment>
<sequence>MKLLVKAPAKINLSLDVLGKRQDGYHEVKMIMTTIDLADRLELMELAEDRIEILSHNRYVPDDQRNLAYQAAKLLKEKFNVKKGVSITIEKTIPVAAGLAGGSSDAAATLRGLNKLWNLGLTIDQLAELGAEIGSDVSFCVYGGTAIATGRGEQIEHIKTPPSCWVILAKPHIGVSTADVYGNLKLNRVTHPNVDKMVDVINAGDYKGICDTVGNVLEDVTFAMHPEVARIKAQMKRFGADAVLMSGSGPTVFGLVHHDSRMHRIYNGLKGFCEQVYAVRLLGERETLE</sequence>
<accession>C3LJ17</accession>
<proteinExistence type="inferred from homology"/>
<keyword id="KW-0067">ATP-binding</keyword>
<keyword id="KW-0414">Isoprene biosynthesis</keyword>
<keyword id="KW-0418">Kinase</keyword>
<keyword id="KW-0547">Nucleotide-binding</keyword>
<keyword id="KW-0808">Transferase</keyword>
<protein>
    <recommendedName>
        <fullName evidence="1">4-diphosphocytidyl-2-C-methyl-D-erythritol kinase</fullName>
        <shortName evidence="1">CMK</shortName>
        <ecNumber evidence="1">2.7.1.148</ecNumber>
    </recommendedName>
    <alternativeName>
        <fullName evidence="1">4-(cytidine-5'-diphospho)-2-C-methyl-D-erythritol kinase</fullName>
    </alternativeName>
</protein>
<organism>
    <name type="scientific">Bacillus anthracis (strain CDC 684 / NRRL 3495)</name>
    <dbReference type="NCBI Taxonomy" id="568206"/>
    <lineage>
        <taxon>Bacteria</taxon>
        <taxon>Bacillati</taxon>
        <taxon>Bacillota</taxon>
        <taxon>Bacilli</taxon>
        <taxon>Bacillales</taxon>
        <taxon>Bacillaceae</taxon>
        <taxon>Bacillus</taxon>
        <taxon>Bacillus cereus group</taxon>
    </lineage>
</organism>
<reference key="1">
    <citation type="submission" date="2008-10" db="EMBL/GenBank/DDBJ databases">
        <title>Genome sequence of Bacillus anthracis str. CDC 684.</title>
        <authorList>
            <person name="Dodson R.J."/>
            <person name="Munk A.C."/>
            <person name="Brettin T."/>
            <person name="Bruce D."/>
            <person name="Detter C."/>
            <person name="Tapia R."/>
            <person name="Han C."/>
            <person name="Sutton G."/>
            <person name="Sims D."/>
        </authorList>
    </citation>
    <scope>NUCLEOTIDE SEQUENCE [LARGE SCALE GENOMIC DNA]</scope>
    <source>
        <strain>CDC 684 / NRRL 3495</strain>
    </source>
</reference>
<dbReference type="EC" id="2.7.1.148" evidence="1"/>
<dbReference type="EMBL" id="CP001215">
    <property type="protein sequence ID" value="ACP15502.1"/>
    <property type="molecule type" value="Genomic_DNA"/>
</dbReference>
<dbReference type="SMR" id="C3LJ17"/>
<dbReference type="KEGG" id="bah:BAMEG_0054"/>
<dbReference type="HOGENOM" id="CLU_053057_1_1_9"/>
<dbReference type="UniPathway" id="UPA00056">
    <property type="reaction ID" value="UER00094"/>
</dbReference>
<dbReference type="GO" id="GO:0050515">
    <property type="term" value="F:4-(cytidine 5'-diphospho)-2-C-methyl-D-erythritol kinase activity"/>
    <property type="evidence" value="ECO:0007669"/>
    <property type="project" value="UniProtKB-UniRule"/>
</dbReference>
<dbReference type="GO" id="GO:0005524">
    <property type="term" value="F:ATP binding"/>
    <property type="evidence" value="ECO:0007669"/>
    <property type="project" value="UniProtKB-UniRule"/>
</dbReference>
<dbReference type="GO" id="GO:0019288">
    <property type="term" value="P:isopentenyl diphosphate biosynthetic process, methylerythritol 4-phosphate pathway"/>
    <property type="evidence" value="ECO:0007669"/>
    <property type="project" value="UniProtKB-UniRule"/>
</dbReference>
<dbReference type="GO" id="GO:0016114">
    <property type="term" value="P:terpenoid biosynthetic process"/>
    <property type="evidence" value="ECO:0007669"/>
    <property type="project" value="InterPro"/>
</dbReference>
<dbReference type="FunFam" id="3.30.230.10:FF:000029">
    <property type="entry name" value="4-diphosphocytidyl-2-C-methyl-D-erythritol kinase"/>
    <property type="match status" value="1"/>
</dbReference>
<dbReference type="FunFam" id="3.30.70.890:FF:000006">
    <property type="entry name" value="4-diphosphocytidyl-2-C-methyl-D-erythritol kinase"/>
    <property type="match status" value="1"/>
</dbReference>
<dbReference type="Gene3D" id="3.30.230.10">
    <property type="match status" value="1"/>
</dbReference>
<dbReference type="Gene3D" id="3.30.70.890">
    <property type="entry name" value="GHMP kinase, C-terminal domain"/>
    <property type="match status" value="1"/>
</dbReference>
<dbReference type="HAMAP" id="MF_00061">
    <property type="entry name" value="IspE"/>
    <property type="match status" value="1"/>
</dbReference>
<dbReference type="InterPro" id="IPR013750">
    <property type="entry name" value="GHMP_kinase_C_dom"/>
</dbReference>
<dbReference type="InterPro" id="IPR036554">
    <property type="entry name" value="GHMP_kinase_C_sf"/>
</dbReference>
<dbReference type="InterPro" id="IPR006204">
    <property type="entry name" value="GHMP_kinase_N_dom"/>
</dbReference>
<dbReference type="InterPro" id="IPR004424">
    <property type="entry name" value="IspE"/>
</dbReference>
<dbReference type="InterPro" id="IPR020568">
    <property type="entry name" value="Ribosomal_Su5_D2-typ_SF"/>
</dbReference>
<dbReference type="InterPro" id="IPR014721">
    <property type="entry name" value="Ribsml_uS5_D2-typ_fold_subgr"/>
</dbReference>
<dbReference type="NCBIfam" id="TIGR00154">
    <property type="entry name" value="ispE"/>
    <property type="match status" value="1"/>
</dbReference>
<dbReference type="NCBIfam" id="NF011202">
    <property type="entry name" value="PRK14608.1"/>
    <property type="match status" value="1"/>
</dbReference>
<dbReference type="PANTHER" id="PTHR43527">
    <property type="entry name" value="4-DIPHOSPHOCYTIDYL-2-C-METHYL-D-ERYTHRITOL KINASE, CHLOROPLASTIC"/>
    <property type="match status" value="1"/>
</dbReference>
<dbReference type="PANTHER" id="PTHR43527:SF2">
    <property type="entry name" value="4-DIPHOSPHOCYTIDYL-2-C-METHYL-D-ERYTHRITOL KINASE, CHLOROPLASTIC"/>
    <property type="match status" value="1"/>
</dbReference>
<dbReference type="Pfam" id="PF08544">
    <property type="entry name" value="GHMP_kinases_C"/>
    <property type="match status" value="1"/>
</dbReference>
<dbReference type="Pfam" id="PF00288">
    <property type="entry name" value="GHMP_kinases_N"/>
    <property type="match status" value="1"/>
</dbReference>
<dbReference type="PIRSF" id="PIRSF010376">
    <property type="entry name" value="IspE"/>
    <property type="match status" value="1"/>
</dbReference>
<dbReference type="SUPFAM" id="SSF55060">
    <property type="entry name" value="GHMP Kinase, C-terminal domain"/>
    <property type="match status" value="1"/>
</dbReference>
<dbReference type="SUPFAM" id="SSF54211">
    <property type="entry name" value="Ribosomal protein S5 domain 2-like"/>
    <property type="match status" value="1"/>
</dbReference>